<evidence type="ECO:0000250" key="1"/>
<evidence type="ECO:0000305" key="2"/>
<feature type="chain" id="PRO_0000163097" description="Molybdopterin synthase catalytic subunit">
    <location>
        <begin position="1"/>
        <end position="148"/>
    </location>
</feature>
<feature type="binding site" evidence="1">
    <location>
        <begin position="34"/>
        <end position="36"/>
    </location>
    <ligand>
        <name>substrate</name>
    </ligand>
</feature>
<feature type="binding site" evidence="1">
    <location>
        <position position="44"/>
    </location>
    <ligand>
        <name>substrate</name>
    </ligand>
</feature>
<feature type="binding site" evidence="1">
    <location>
        <begin position="100"/>
        <end position="101"/>
    </location>
    <ligand>
        <name>substrate</name>
    </ligand>
</feature>
<feature type="binding site" evidence="1">
    <location>
        <position position="116"/>
    </location>
    <ligand>
        <name>substrate</name>
    </ligand>
</feature>
<feature type="binding site" evidence="1">
    <location>
        <begin position="123"/>
        <end position="125"/>
    </location>
    <ligand>
        <name>substrate</name>
    </ligand>
</feature>
<accession>Q5HDT6</accession>
<organism>
    <name type="scientific">Staphylococcus aureus (strain COL)</name>
    <dbReference type="NCBI Taxonomy" id="93062"/>
    <lineage>
        <taxon>Bacteria</taxon>
        <taxon>Bacillati</taxon>
        <taxon>Bacillota</taxon>
        <taxon>Bacilli</taxon>
        <taxon>Bacillales</taxon>
        <taxon>Staphylococcaceae</taxon>
        <taxon>Staphylococcus</taxon>
    </lineage>
</organism>
<keyword id="KW-0501">Molybdenum cofactor biosynthesis</keyword>
<keyword id="KW-0808">Transferase</keyword>
<name>MOAE_STAAC</name>
<reference key="1">
    <citation type="journal article" date="2005" name="J. Bacteriol.">
        <title>Insights on evolution of virulence and resistance from the complete genome analysis of an early methicillin-resistant Staphylococcus aureus strain and a biofilm-producing methicillin-resistant Staphylococcus epidermidis strain.</title>
        <authorList>
            <person name="Gill S.R."/>
            <person name="Fouts D.E."/>
            <person name="Archer G.L."/>
            <person name="Mongodin E.F."/>
            <person name="DeBoy R.T."/>
            <person name="Ravel J."/>
            <person name="Paulsen I.T."/>
            <person name="Kolonay J.F."/>
            <person name="Brinkac L.M."/>
            <person name="Beanan M.J."/>
            <person name="Dodson R.J."/>
            <person name="Daugherty S.C."/>
            <person name="Madupu R."/>
            <person name="Angiuoli S.V."/>
            <person name="Durkin A.S."/>
            <person name="Haft D.H."/>
            <person name="Vamathevan J.J."/>
            <person name="Khouri H."/>
            <person name="Utterback T.R."/>
            <person name="Lee C."/>
            <person name="Dimitrov G."/>
            <person name="Jiang L."/>
            <person name="Qin H."/>
            <person name="Weidman J."/>
            <person name="Tran K."/>
            <person name="Kang K.H."/>
            <person name="Hance I.R."/>
            <person name="Nelson K.E."/>
            <person name="Fraser C.M."/>
        </authorList>
    </citation>
    <scope>NUCLEOTIDE SEQUENCE [LARGE SCALE GENOMIC DNA]</scope>
    <source>
        <strain>COL</strain>
    </source>
</reference>
<comment type="function">
    <text evidence="1">Converts molybdopterin precursor Z into molybdopterin. This requires the incorporation of two sulfur atoms into precursor Z to generate a dithiolene group. The sulfur is provided by MoaD (By similarity).</text>
</comment>
<comment type="catalytic activity">
    <reaction>
        <text>2 [molybdopterin-synthase sulfur-carrier protein]-C-terminal-Gly-aminoethanethioate + cyclic pyranopterin phosphate + H2O = molybdopterin + 2 [molybdopterin-synthase sulfur-carrier protein]-C-terminal Gly-Gly + 2 H(+)</text>
        <dbReference type="Rhea" id="RHEA:26333"/>
        <dbReference type="Rhea" id="RHEA-COMP:12202"/>
        <dbReference type="Rhea" id="RHEA-COMP:19907"/>
        <dbReference type="ChEBI" id="CHEBI:15377"/>
        <dbReference type="ChEBI" id="CHEBI:15378"/>
        <dbReference type="ChEBI" id="CHEBI:58698"/>
        <dbReference type="ChEBI" id="CHEBI:59648"/>
        <dbReference type="ChEBI" id="CHEBI:90778"/>
        <dbReference type="ChEBI" id="CHEBI:232372"/>
        <dbReference type="EC" id="2.8.1.12"/>
    </reaction>
</comment>
<comment type="pathway">
    <text>Cofactor biosynthesis; molybdopterin biosynthesis.</text>
</comment>
<comment type="subunit">
    <text evidence="1">Heterotetramer of 2 MoaD subunits and 2 MoaE subunits. Also stable as homodimer. The enzyme changes between these two forms during catalysis (By similarity).</text>
</comment>
<comment type="similarity">
    <text evidence="2">Belongs to the MoaE family.</text>
</comment>
<dbReference type="EC" id="2.8.1.12"/>
<dbReference type="EMBL" id="CP000046">
    <property type="protein sequence ID" value="AAW37136.1"/>
    <property type="molecule type" value="Genomic_DNA"/>
</dbReference>
<dbReference type="RefSeq" id="WP_000808500.1">
    <property type="nucleotide sequence ID" value="NZ_JBGOFO010000004.1"/>
</dbReference>
<dbReference type="SMR" id="Q5HDT6"/>
<dbReference type="KEGG" id="sac:SACOL2264"/>
<dbReference type="HOGENOM" id="CLU_089568_1_2_9"/>
<dbReference type="UniPathway" id="UPA00344"/>
<dbReference type="Proteomes" id="UP000000530">
    <property type="component" value="Chromosome"/>
</dbReference>
<dbReference type="GO" id="GO:0030366">
    <property type="term" value="F:molybdopterin synthase activity"/>
    <property type="evidence" value="ECO:0007669"/>
    <property type="project" value="UniProtKB-EC"/>
</dbReference>
<dbReference type="GO" id="GO:0006777">
    <property type="term" value="P:Mo-molybdopterin cofactor biosynthetic process"/>
    <property type="evidence" value="ECO:0007669"/>
    <property type="project" value="UniProtKB-KW"/>
</dbReference>
<dbReference type="CDD" id="cd00756">
    <property type="entry name" value="MoaE"/>
    <property type="match status" value="1"/>
</dbReference>
<dbReference type="FunFam" id="3.90.1170.40:FF:000003">
    <property type="entry name" value="Molybdopterin converting factor subunit 2"/>
    <property type="match status" value="1"/>
</dbReference>
<dbReference type="Gene3D" id="3.90.1170.40">
    <property type="entry name" value="Molybdopterin biosynthesis MoaE subunit"/>
    <property type="match status" value="1"/>
</dbReference>
<dbReference type="InterPro" id="IPR036563">
    <property type="entry name" value="MoaE_sf"/>
</dbReference>
<dbReference type="InterPro" id="IPR003448">
    <property type="entry name" value="Mopterin_biosynth_MoaE"/>
</dbReference>
<dbReference type="PANTHER" id="PTHR23404">
    <property type="entry name" value="MOLYBDOPTERIN SYNTHASE RELATED"/>
    <property type="match status" value="1"/>
</dbReference>
<dbReference type="Pfam" id="PF02391">
    <property type="entry name" value="MoaE"/>
    <property type="match status" value="1"/>
</dbReference>
<dbReference type="SUPFAM" id="SSF54690">
    <property type="entry name" value="Molybdopterin synthase subunit MoaE"/>
    <property type="match status" value="1"/>
</dbReference>
<proteinExistence type="inferred from homology"/>
<sequence>MKQFEIVTEPIQTEQYREFTINEYQGAVVVFTGHVREWTKGVKTEYLEYEAYIPMAEKKLAQIGDEINEKWPGTITSIVHRIGPLQISDIAVLIAVSSPHRKDAYRANEYAIERIKEIVPIWKKEIWEDGSKWQGHQKGNYEEAKREE</sequence>
<protein>
    <recommendedName>
        <fullName>Molybdopterin synthase catalytic subunit</fullName>
        <ecNumber>2.8.1.12</ecNumber>
    </recommendedName>
    <alternativeName>
        <fullName>MPT synthase subunit 2</fullName>
    </alternativeName>
    <alternativeName>
        <fullName>Molybdenum cofactor biosynthesis protein E</fullName>
    </alternativeName>
    <alternativeName>
        <fullName>Molybdopterin-converting factor large subunit</fullName>
    </alternativeName>
    <alternativeName>
        <fullName>Molybdopterin-converting factor subunit 2</fullName>
    </alternativeName>
</protein>
<gene>
    <name type="primary">moaE</name>
    <name type="ordered locus">SACOL2264</name>
</gene>